<accession>P53437</accession>
<accession>D6W096</accession>
<accession>E9P918</accession>
<proteinExistence type="evidence at protein level"/>
<comment type="function">
    <text evidence="4">Component of the UAF (upstream activation factor) complex which interacts with the upstream element of the RNA polymerase I promoter and forms a stable preinitiation complex. Together with SPT15/TBP UAF seems to stimulate basal transcription to a fully activated level.</text>
</comment>
<comment type="subunit">
    <text evidence="2 3">Component of the UAF (upstream activation factor) complex which consists of UAF30, RRN5, RRN9, RRN10, and histones H3 and H4. Interacts with SPT15 and RRN7.</text>
</comment>
<comment type="interaction">
    <interactant intactId="EBI-15994">
        <id>P53437</id>
    </interactant>
    <interactant intactId="EBI-15998">
        <id>P38204</id>
        <label>RRN10</label>
    </interactant>
    <organismsDiffer>false</organismsDiffer>
    <experiments>3</experiments>
</comment>
<comment type="subcellular location">
    <subcellularLocation>
        <location evidence="1">Nucleus</location>
        <location evidence="1">Nucleolus</location>
    </subcellularLocation>
</comment>
<comment type="similarity">
    <text evidence="5">Belongs to the RRN9 family.</text>
</comment>
<keyword id="KW-0002">3D-structure</keyword>
<keyword id="KW-0539">Nucleus</keyword>
<keyword id="KW-1185">Reference proteome</keyword>
<keyword id="KW-0804">Transcription</keyword>
<keyword id="KW-0805">Transcription regulation</keyword>
<sequence length="365" mass="42813">MSDLDEESQIETQIDAPIEDIIRGSELTTTTADKETLKSANELLDSLEHSHRVDLSLHLYSAYLLKRLLYKANEKKHFYEVNQFVKTQIKDNWTSWPNPNTIIDPSVDKLYEDIPEGIANVSVQPGEISNRALMHASDMMRVELDAQWQKFLSKSALDHDVTLDVDELNIPNEISRNILVKLDSLFEGLHDKIAKENEFDVRQDKHSNNIRANQIDDEPMQANRRIKYTYHDLVSRGCEMNEDMTDIYMKSLELYNDIPEKYKKRKFRLPKQILKKYHQPKKTSSYLKELLSKTREDFIPVEKLLKDKRLTSKDKSKLQRLNREETEDALNKRTFFQVKGYLEDENEISDYELDDCLIELPNGNI</sequence>
<protein>
    <recommendedName>
        <fullName>RNA polymerase I-specific transcription initiation factor RRN9</fullName>
    </recommendedName>
</protein>
<gene>
    <name type="primary">RRN9</name>
    <name type="ordered locus">YMR270C</name>
    <name type="ORF">YM8156.12C</name>
</gene>
<name>RRN9_YEAST</name>
<evidence type="ECO:0000269" key="1">
    <source>
    </source>
</evidence>
<evidence type="ECO:0000269" key="2">
    <source>
    </source>
</evidence>
<evidence type="ECO:0000269" key="3">
    <source>
    </source>
</evidence>
<evidence type="ECO:0000269" key="4">
    <source>
    </source>
</evidence>
<evidence type="ECO:0000305" key="5"/>
<evidence type="ECO:0007829" key="6">
    <source>
        <dbReference type="PDB" id="7Z0O"/>
    </source>
</evidence>
<feature type="chain" id="PRO_0000097451" description="RNA polymerase I-specific transcription initiation factor RRN9">
    <location>
        <begin position="1"/>
        <end position="365"/>
    </location>
</feature>
<feature type="sequence conflict" description="In Ref. 4; AAT93123." evidence="5" ref="4">
    <original>Y</original>
    <variation>H</variation>
    <location>
        <position position="255"/>
    </location>
</feature>
<feature type="helix" evidence="6">
    <location>
        <begin position="37"/>
        <end position="53"/>
    </location>
</feature>
<feature type="helix" evidence="6">
    <location>
        <begin position="56"/>
        <end position="72"/>
    </location>
</feature>
<feature type="strand" evidence="6">
    <location>
        <begin position="74"/>
        <end position="76"/>
    </location>
</feature>
<feature type="helix" evidence="6">
    <location>
        <begin position="78"/>
        <end position="88"/>
    </location>
</feature>
<feature type="helix" evidence="6">
    <location>
        <begin position="91"/>
        <end position="93"/>
    </location>
</feature>
<feature type="turn" evidence="6">
    <location>
        <begin position="108"/>
        <end position="110"/>
    </location>
</feature>
<feature type="strand" evidence="6">
    <location>
        <begin position="111"/>
        <end position="113"/>
    </location>
</feature>
<feature type="helix" evidence="6">
    <location>
        <begin position="130"/>
        <end position="159"/>
    </location>
</feature>
<feature type="helix" evidence="6">
    <location>
        <begin position="172"/>
        <end position="207"/>
    </location>
</feature>
<feature type="helix" evidence="6">
    <location>
        <begin position="230"/>
        <end position="239"/>
    </location>
</feature>
<feature type="helix" evidence="6">
    <location>
        <begin position="245"/>
        <end position="255"/>
    </location>
</feature>
<feature type="turn" evidence="6">
    <location>
        <begin position="256"/>
        <end position="258"/>
    </location>
</feature>
<feature type="helix" evidence="6">
    <location>
        <begin position="259"/>
        <end position="261"/>
    </location>
</feature>
<feature type="helix" evidence="6">
    <location>
        <begin position="264"/>
        <end position="267"/>
    </location>
</feature>
<feature type="helix" evidence="6">
    <location>
        <begin position="271"/>
        <end position="276"/>
    </location>
</feature>
<feature type="helix" evidence="6">
    <location>
        <begin position="287"/>
        <end position="293"/>
    </location>
</feature>
<feature type="strand" evidence="6">
    <location>
        <begin position="295"/>
        <end position="300"/>
    </location>
</feature>
<feature type="helix" evidence="6">
    <location>
        <begin position="301"/>
        <end position="305"/>
    </location>
</feature>
<feature type="helix" evidence="6">
    <location>
        <begin position="312"/>
        <end position="339"/>
    </location>
</feature>
<feature type="helix" evidence="6">
    <location>
        <begin position="353"/>
        <end position="355"/>
    </location>
</feature>
<dbReference type="EMBL" id="U43681">
    <property type="protein sequence ID" value="AAC49258.1"/>
    <property type="molecule type" value="Genomic_DNA"/>
</dbReference>
<dbReference type="EMBL" id="Z49260">
    <property type="protein sequence ID" value="CAA89253.1"/>
    <property type="molecule type" value="Genomic_DNA"/>
</dbReference>
<dbReference type="EMBL" id="AY693104">
    <property type="protein sequence ID" value="AAT93123.1"/>
    <property type="molecule type" value="Genomic_DNA"/>
</dbReference>
<dbReference type="EMBL" id="BK006946">
    <property type="protein sequence ID" value="DAA10170.1"/>
    <property type="molecule type" value="Genomic_DNA"/>
</dbReference>
<dbReference type="PIR" id="S54482">
    <property type="entry name" value="S54482"/>
</dbReference>
<dbReference type="RefSeq" id="NP_013997.1">
    <property type="nucleotide sequence ID" value="NM_001182777.1"/>
</dbReference>
<dbReference type="PDB" id="7Z0O">
    <property type="method" value="EM"/>
    <property type="resolution" value="2.80 A"/>
    <property type="chains" value="E=1-365"/>
</dbReference>
<dbReference type="PDBsum" id="7Z0O"/>
<dbReference type="EMDB" id="EMD-14428"/>
<dbReference type="SMR" id="P53437"/>
<dbReference type="BioGRID" id="35448">
    <property type="interactions" value="137"/>
</dbReference>
<dbReference type="ComplexPortal" id="CPX-1101">
    <property type="entry name" value="RNA polymerase I upstream activating factor complex"/>
</dbReference>
<dbReference type="DIP" id="DIP-1596N"/>
<dbReference type="FunCoup" id="P53437">
    <property type="interactions" value="141"/>
</dbReference>
<dbReference type="IntAct" id="P53437">
    <property type="interactions" value="28"/>
</dbReference>
<dbReference type="MINT" id="P53437"/>
<dbReference type="STRING" id="4932.YMR270C"/>
<dbReference type="iPTMnet" id="P53437"/>
<dbReference type="PaxDb" id="4932-YMR270C"/>
<dbReference type="PeptideAtlas" id="P53437"/>
<dbReference type="EnsemblFungi" id="YMR270C_mRNA">
    <property type="protein sequence ID" value="YMR270C"/>
    <property type="gene ID" value="YMR270C"/>
</dbReference>
<dbReference type="GeneID" id="855312"/>
<dbReference type="KEGG" id="sce:YMR270C"/>
<dbReference type="AGR" id="SGD:S000004883"/>
<dbReference type="SGD" id="S000004883">
    <property type="gene designation" value="RRN9"/>
</dbReference>
<dbReference type="VEuPathDB" id="FungiDB:YMR270C"/>
<dbReference type="eggNOG" id="ENOG502QRG3">
    <property type="taxonomic scope" value="Eukaryota"/>
</dbReference>
<dbReference type="HOGENOM" id="CLU_061609_0_0_1"/>
<dbReference type="InParanoid" id="P53437"/>
<dbReference type="OMA" id="ISRGCEM"/>
<dbReference type="OrthoDB" id="4068335at2759"/>
<dbReference type="BioCyc" id="YEAST:G3O-32943-MONOMER"/>
<dbReference type="BioGRID-ORCS" id="855312">
    <property type="hits" value="1 hit in 10 CRISPR screens"/>
</dbReference>
<dbReference type="PRO" id="PR:P53437"/>
<dbReference type="Proteomes" id="UP000002311">
    <property type="component" value="Chromosome XIII"/>
</dbReference>
<dbReference type="RNAct" id="P53437">
    <property type="molecule type" value="protein"/>
</dbReference>
<dbReference type="GO" id="GO:0005730">
    <property type="term" value="C:nucleolus"/>
    <property type="evidence" value="ECO:0000314"/>
    <property type="project" value="SGD"/>
</dbReference>
<dbReference type="GO" id="GO:0005634">
    <property type="term" value="C:nucleus"/>
    <property type="evidence" value="ECO:0000303"/>
    <property type="project" value="ComplexPortal"/>
</dbReference>
<dbReference type="GO" id="GO:0000500">
    <property type="term" value="C:RNA polymerase I upstream activating factor complex"/>
    <property type="evidence" value="ECO:0000314"/>
    <property type="project" value="SGD"/>
</dbReference>
<dbReference type="GO" id="GO:0001181">
    <property type="term" value="F:RNA polymerase I general transcription initiation factor activity"/>
    <property type="evidence" value="ECO:0000314"/>
    <property type="project" value="SGD"/>
</dbReference>
<dbReference type="GO" id="GO:0017025">
    <property type="term" value="F:TBP-class protein binding"/>
    <property type="evidence" value="ECO:0000314"/>
    <property type="project" value="SGD"/>
</dbReference>
<dbReference type="GO" id="GO:0042790">
    <property type="term" value="P:nucleolar large rRNA transcription by RNA polymerase I"/>
    <property type="evidence" value="ECO:0000314"/>
    <property type="project" value="ComplexPortal"/>
</dbReference>
<dbReference type="GO" id="GO:0045943">
    <property type="term" value="P:positive regulation of transcription by RNA polymerase I"/>
    <property type="evidence" value="ECO:0000314"/>
    <property type="project" value="ComplexPortal"/>
</dbReference>
<dbReference type="InterPro" id="IPR019622">
    <property type="entry name" value="Rrn9_dom"/>
</dbReference>
<dbReference type="Pfam" id="PF10680">
    <property type="entry name" value="RRN9"/>
    <property type="match status" value="1"/>
</dbReference>
<reference key="1">
    <citation type="journal article" date="1996" name="Genes Dev.">
        <title>Multiprotein transcription factor UAF interacts with the upstream element of the yeast RNA polymerase I promoter and forms a stable preinitiation complex.</title>
        <authorList>
            <person name="Keys D.A."/>
            <person name="Lee B.-S."/>
            <person name="Dodd J.A."/>
            <person name="Nguyen T.T."/>
            <person name="Vu L."/>
            <person name="Fantino E."/>
            <person name="Burson L.M."/>
            <person name="Nogi Y."/>
            <person name="Nomura M."/>
        </authorList>
    </citation>
    <scope>NUCLEOTIDE SEQUENCE [GENOMIC DNA]</scope>
    <scope>IDENTIFICATION IN THE UAF COMPLEX</scope>
    <source>
        <strain>NOY698</strain>
    </source>
</reference>
<reference key="2">
    <citation type="journal article" date="1997" name="Nature">
        <title>The nucleotide sequence of Saccharomyces cerevisiae chromosome XIII.</title>
        <authorList>
            <person name="Bowman S."/>
            <person name="Churcher C.M."/>
            <person name="Badcock K."/>
            <person name="Brown D."/>
            <person name="Chillingworth T."/>
            <person name="Connor R."/>
            <person name="Dedman K."/>
            <person name="Devlin K."/>
            <person name="Gentles S."/>
            <person name="Hamlin N."/>
            <person name="Hunt S."/>
            <person name="Jagels K."/>
            <person name="Lye G."/>
            <person name="Moule S."/>
            <person name="Odell C."/>
            <person name="Pearson D."/>
            <person name="Rajandream M.A."/>
            <person name="Rice P."/>
            <person name="Skelton J."/>
            <person name="Walsh S.V."/>
            <person name="Whitehead S."/>
            <person name="Barrell B.G."/>
        </authorList>
    </citation>
    <scope>NUCLEOTIDE SEQUENCE [LARGE SCALE GENOMIC DNA]</scope>
    <source>
        <strain>ATCC 204508 / S288c</strain>
    </source>
</reference>
<reference key="3">
    <citation type="journal article" date="2014" name="G3 (Bethesda)">
        <title>The reference genome sequence of Saccharomyces cerevisiae: Then and now.</title>
        <authorList>
            <person name="Engel S.R."/>
            <person name="Dietrich F.S."/>
            <person name="Fisk D.G."/>
            <person name="Binkley G."/>
            <person name="Balakrishnan R."/>
            <person name="Costanzo M.C."/>
            <person name="Dwight S.S."/>
            <person name="Hitz B.C."/>
            <person name="Karra K."/>
            <person name="Nash R.S."/>
            <person name="Weng S."/>
            <person name="Wong E.D."/>
            <person name="Lloyd P."/>
            <person name="Skrzypek M.S."/>
            <person name="Miyasato S.R."/>
            <person name="Simison M."/>
            <person name="Cherry J.M."/>
        </authorList>
    </citation>
    <scope>GENOME REANNOTATION</scope>
    <source>
        <strain>ATCC 204508 / S288c</strain>
    </source>
</reference>
<reference key="4">
    <citation type="journal article" date="2007" name="Genome Res.">
        <title>Approaching a complete repository of sequence-verified protein-encoding clones for Saccharomyces cerevisiae.</title>
        <authorList>
            <person name="Hu Y."/>
            <person name="Rolfs A."/>
            <person name="Bhullar B."/>
            <person name="Murthy T.V.S."/>
            <person name="Zhu C."/>
            <person name="Berger M.F."/>
            <person name="Camargo A.A."/>
            <person name="Kelley F."/>
            <person name="McCarron S."/>
            <person name="Jepson D."/>
            <person name="Richardson A."/>
            <person name="Raphael J."/>
            <person name="Moreira D."/>
            <person name="Taycher E."/>
            <person name="Zuo D."/>
            <person name="Mohr S."/>
            <person name="Kane M.F."/>
            <person name="Williamson J."/>
            <person name="Simpson A.J.G."/>
            <person name="Bulyk M.L."/>
            <person name="Harlow E."/>
            <person name="Marsischky G."/>
            <person name="Kolodner R.D."/>
            <person name="LaBaer J."/>
        </authorList>
    </citation>
    <scope>NUCLEOTIDE SEQUENCE [GENOMIC DNA]</scope>
    <source>
        <strain>ATCC 204508 / S288c</strain>
    </source>
</reference>
<reference key="5">
    <citation type="journal article" date="1996" name="Genes Dev.">
        <title>The role of TBP in rDNA transcription by RNA polymerase I in Saccharomyces cerevisiae: TBP is required for upstream activation factor-dependent recruitment of core factor.</title>
        <authorList>
            <person name="Steffan J.S."/>
            <person name="Keys D.A."/>
            <person name="Dodd J.A."/>
            <person name="Nomura M."/>
        </authorList>
    </citation>
    <scope>INTERACTION WITH SPT15 AND RRN7</scope>
</reference>
<reference key="6">
    <citation type="journal article" date="1998" name="J. Biol. Chem.">
        <title>Reconstitution of yeast RNA polymerase I transcription in vitro from purified components. TATA-binding protein is not required for basal transcription.</title>
        <authorList>
            <person name="Keener J."/>
            <person name="Josaitis C.A."/>
            <person name="Dodd J.A."/>
            <person name="Nomura M."/>
        </authorList>
    </citation>
    <scope>FUNCTION OF THE UAF COMPLEX</scope>
</reference>
<reference key="7">
    <citation type="journal article" date="2003" name="Nature">
        <title>Global analysis of protein localization in budding yeast.</title>
        <authorList>
            <person name="Huh W.-K."/>
            <person name="Falvo J.V."/>
            <person name="Gerke L.C."/>
            <person name="Carroll A.S."/>
            <person name="Howson R.W."/>
            <person name="Weissman J.S."/>
            <person name="O'Shea E.K."/>
        </authorList>
    </citation>
    <scope>SUBCELLULAR LOCATION [LARGE SCALE ANALYSIS]</scope>
</reference>
<organism>
    <name type="scientific">Saccharomyces cerevisiae (strain ATCC 204508 / S288c)</name>
    <name type="common">Baker's yeast</name>
    <dbReference type="NCBI Taxonomy" id="559292"/>
    <lineage>
        <taxon>Eukaryota</taxon>
        <taxon>Fungi</taxon>
        <taxon>Dikarya</taxon>
        <taxon>Ascomycota</taxon>
        <taxon>Saccharomycotina</taxon>
        <taxon>Saccharomycetes</taxon>
        <taxon>Saccharomycetales</taxon>
        <taxon>Saccharomycetaceae</taxon>
        <taxon>Saccharomyces</taxon>
    </lineage>
</organism>